<organism>
    <name type="scientific">Aliivibrio fischeri (strain ATCC 700601 / ES114)</name>
    <name type="common">Vibrio fischeri</name>
    <dbReference type="NCBI Taxonomy" id="312309"/>
    <lineage>
        <taxon>Bacteria</taxon>
        <taxon>Pseudomonadati</taxon>
        <taxon>Pseudomonadota</taxon>
        <taxon>Gammaproteobacteria</taxon>
        <taxon>Vibrionales</taxon>
        <taxon>Vibrionaceae</taxon>
        <taxon>Aliivibrio</taxon>
    </lineage>
</organism>
<proteinExistence type="inferred from homology"/>
<evidence type="ECO:0000255" key="1">
    <source>
        <dbReference type="HAMAP-Rule" id="MF_01619"/>
    </source>
</evidence>
<comment type="catalytic activity">
    <reaction evidence="1">
        <text>(S)-malate + NAD(+) = pyruvate + CO2 + NADH</text>
        <dbReference type="Rhea" id="RHEA:12653"/>
        <dbReference type="ChEBI" id="CHEBI:15361"/>
        <dbReference type="ChEBI" id="CHEBI:15589"/>
        <dbReference type="ChEBI" id="CHEBI:16526"/>
        <dbReference type="ChEBI" id="CHEBI:57540"/>
        <dbReference type="ChEBI" id="CHEBI:57945"/>
        <dbReference type="EC" id="1.1.1.38"/>
    </reaction>
</comment>
<comment type="catalytic activity">
    <reaction evidence="1">
        <text>oxaloacetate + H(+) = pyruvate + CO2</text>
        <dbReference type="Rhea" id="RHEA:15641"/>
        <dbReference type="ChEBI" id="CHEBI:15361"/>
        <dbReference type="ChEBI" id="CHEBI:15378"/>
        <dbReference type="ChEBI" id="CHEBI:16452"/>
        <dbReference type="ChEBI" id="CHEBI:16526"/>
        <dbReference type="EC" id="1.1.1.38"/>
    </reaction>
</comment>
<comment type="cofactor">
    <cofactor evidence="1">
        <name>Mg(2+)</name>
        <dbReference type="ChEBI" id="CHEBI:18420"/>
    </cofactor>
    <cofactor evidence="1">
        <name>Mn(2+)</name>
        <dbReference type="ChEBI" id="CHEBI:29035"/>
    </cofactor>
    <text evidence="1">Divalent metal cations. Prefers magnesium or manganese.</text>
</comment>
<comment type="subunit">
    <text evidence="1">Homotetramer.</text>
</comment>
<comment type="similarity">
    <text evidence="1">Belongs to the malic enzymes family.</text>
</comment>
<accession>Q5E4J3</accession>
<protein>
    <recommendedName>
        <fullName evidence="1">NAD-dependent malic enzyme</fullName>
        <shortName evidence="1">NAD-ME</shortName>
        <ecNumber evidence="1">1.1.1.38</ecNumber>
    </recommendedName>
</protein>
<reference key="1">
    <citation type="journal article" date="2005" name="Proc. Natl. Acad. Sci. U.S.A.">
        <title>Complete genome sequence of Vibrio fischeri: a symbiotic bacterium with pathogenic congeners.</title>
        <authorList>
            <person name="Ruby E.G."/>
            <person name="Urbanowski M."/>
            <person name="Campbell J."/>
            <person name="Dunn A."/>
            <person name="Faini M."/>
            <person name="Gunsalus R."/>
            <person name="Lostroh P."/>
            <person name="Lupp C."/>
            <person name="McCann J."/>
            <person name="Millikan D."/>
            <person name="Schaefer A."/>
            <person name="Stabb E."/>
            <person name="Stevens A."/>
            <person name="Visick K."/>
            <person name="Whistler C."/>
            <person name="Greenberg E.P."/>
        </authorList>
    </citation>
    <scope>NUCLEOTIDE SEQUENCE [LARGE SCALE GENOMIC DNA]</scope>
    <source>
        <strain>ATCC 700601 / ES114</strain>
    </source>
</reference>
<sequence>MNNNKRPLYIPYAGPALLSTPLLNKGSAFSTTERKYFNLEGLLPEAIESIEEQTGRAYKQYQNFENDMDKHIYLRNIQDTNETLFYRLVQNHISEMMPIIYTPTVGAACENFSNIYRRGRGLFISYENKNRIDDLLNNAANQNVKVIVVTDGERILGLGDQGIGGMGIPIGKLALYTACGGISPAHTLPIVLDVGTNNPQRLADPMYMGWRHPRVTGDEYADFVEDFIQAVQRRWPEALVQFEDFAQKNAMPLLERYKNRICCFNDDIQGTAAVTVGSLLAACKAAGSSLSEQRVTFLGAGSAGCGIAEAIIAQMVSEGISDAQARSQVYMVDRWGLLQEGMPNLLDFQQRLVQKAENTKDWVSEEPNFSLVDVMRNAKPTVLIGVSGAPGLFSKEVIQEMHKHCERPIVFPLSNPTSRVEATPNDIIRWTDGQALVATGSPFDPVAHNGQTYPIAQCNNSFIFPGIGLGVLAIKATRVTDEMLMESSRALAECSPLAIHGTGALLPPLEEIHSVSKRIAFAVAKKAIEQGHALEITDEALQQKIESYFWKPVYRRYKRTAF</sequence>
<keyword id="KW-0479">Metal-binding</keyword>
<keyword id="KW-0520">NAD</keyword>
<keyword id="KW-0560">Oxidoreductase</keyword>
<keyword id="KW-1185">Reference proteome</keyword>
<gene>
    <name evidence="1" type="primary">maeA</name>
    <name type="ordered locus">VF_1558</name>
</gene>
<name>MAO1_ALIF1</name>
<dbReference type="EC" id="1.1.1.38" evidence="1"/>
<dbReference type="EMBL" id="CP000020">
    <property type="protein sequence ID" value="AAW86053.1"/>
    <property type="molecule type" value="Genomic_DNA"/>
</dbReference>
<dbReference type="RefSeq" id="WP_011262133.1">
    <property type="nucleotide sequence ID" value="NC_006840.2"/>
</dbReference>
<dbReference type="RefSeq" id="YP_204941.1">
    <property type="nucleotide sequence ID" value="NC_006840.2"/>
</dbReference>
<dbReference type="SMR" id="Q5E4J3"/>
<dbReference type="STRING" id="312309.VF_1558"/>
<dbReference type="EnsemblBacteria" id="AAW86053">
    <property type="protein sequence ID" value="AAW86053"/>
    <property type="gene ID" value="VF_1558"/>
</dbReference>
<dbReference type="GeneID" id="54164232"/>
<dbReference type="KEGG" id="vfi:VF_1558"/>
<dbReference type="PATRIC" id="fig|312309.11.peg.1576"/>
<dbReference type="eggNOG" id="COG0281">
    <property type="taxonomic scope" value="Bacteria"/>
</dbReference>
<dbReference type="HOGENOM" id="CLU_011405_5_2_6"/>
<dbReference type="OrthoDB" id="3314528at2"/>
<dbReference type="Proteomes" id="UP000000537">
    <property type="component" value="Chromosome I"/>
</dbReference>
<dbReference type="GO" id="GO:0005829">
    <property type="term" value="C:cytosol"/>
    <property type="evidence" value="ECO:0007669"/>
    <property type="project" value="TreeGrafter"/>
</dbReference>
<dbReference type="GO" id="GO:0004471">
    <property type="term" value="F:malate dehydrogenase (decarboxylating) (NAD+) activity"/>
    <property type="evidence" value="ECO:0007669"/>
    <property type="project" value="UniProtKB-UniRule"/>
</dbReference>
<dbReference type="GO" id="GO:0046872">
    <property type="term" value="F:metal ion binding"/>
    <property type="evidence" value="ECO:0007669"/>
    <property type="project" value="UniProtKB-KW"/>
</dbReference>
<dbReference type="GO" id="GO:0051287">
    <property type="term" value="F:NAD binding"/>
    <property type="evidence" value="ECO:0007669"/>
    <property type="project" value="InterPro"/>
</dbReference>
<dbReference type="GO" id="GO:0008948">
    <property type="term" value="F:oxaloacetate decarboxylase activity"/>
    <property type="evidence" value="ECO:0007669"/>
    <property type="project" value="UniProtKB-UniRule"/>
</dbReference>
<dbReference type="GO" id="GO:0006108">
    <property type="term" value="P:malate metabolic process"/>
    <property type="evidence" value="ECO:0007669"/>
    <property type="project" value="TreeGrafter"/>
</dbReference>
<dbReference type="CDD" id="cd05312">
    <property type="entry name" value="NAD_bind_1_malic_enz"/>
    <property type="match status" value="1"/>
</dbReference>
<dbReference type="FunFam" id="3.40.50.10380:FF:000001">
    <property type="entry name" value="NAD-dependent malic enzyme"/>
    <property type="match status" value="1"/>
</dbReference>
<dbReference type="FunFam" id="3.40.50.720:FF:000055">
    <property type="entry name" value="NAD-dependent malic enzyme"/>
    <property type="match status" value="1"/>
</dbReference>
<dbReference type="Gene3D" id="3.40.50.10380">
    <property type="entry name" value="Malic enzyme, N-terminal domain"/>
    <property type="match status" value="1"/>
</dbReference>
<dbReference type="Gene3D" id="3.40.50.720">
    <property type="entry name" value="NAD(P)-binding Rossmann-like Domain"/>
    <property type="match status" value="1"/>
</dbReference>
<dbReference type="HAMAP" id="MF_01619">
    <property type="entry name" value="NAD_malic_enz"/>
    <property type="match status" value="1"/>
</dbReference>
<dbReference type="InterPro" id="IPR046346">
    <property type="entry name" value="Aminoacid_DH-like_N_sf"/>
</dbReference>
<dbReference type="InterPro" id="IPR015884">
    <property type="entry name" value="Malic_enzyme_CS"/>
</dbReference>
<dbReference type="InterPro" id="IPR012301">
    <property type="entry name" value="Malic_N_dom"/>
</dbReference>
<dbReference type="InterPro" id="IPR037062">
    <property type="entry name" value="Malic_N_dom_sf"/>
</dbReference>
<dbReference type="InterPro" id="IPR012302">
    <property type="entry name" value="Malic_NAD-bd"/>
</dbReference>
<dbReference type="InterPro" id="IPR001891">
    <property type="entry name" value="Malic_OxRdtase"/>
</dbReference>
<dbReference type="InterPro" id="IPR036291">
    <property type="entry name" value="NAD(P)-bd_dom_sf"/>
</dbReference>
<dbReference type="InterPro" id="IPR023667">
    <property type="entry name" value="NAD_malic_enz_proteobac"/>
</dbReference>
<dbReference type="NCBIfam" id="NF010052">
    <property type="entry name" value="PRK13529.1"/>
    <property type="match status" value="1"/>
</dbReference>
<dbReference type="PANTHER" id="PTHR23406">
    <property type="entry name" value="MALIC ENZYME-RELATED"/>
    <property type="match status" value="1"/>
</dbReference>
<dbReference type="PANTHER" id="PTHR23406:SF34">
    <property type="entry name" value="NAD-DEPENDENT MALIC ENZYME, MITOCHONDRIAL"/>
    <property type="match status" value="1"/>
</dbReference>
<dbReference type="Pfam" id="PF00390">
    <property type="entry name" value="malic"/>
    <property type="match status" value="1"/>
</dbReference>
<dbReference type="Pfam" id="PF03949">
    <property type="entry name" value="Malic_M"/>
    <property type="match status" value="1"/>
</dbReference>
<dbReference type="PIRSF" id="PIRSF000106">
    <property type="entry name" value="ME"/>
    <property type="match status" value="1"/>
</dbReference>
<dbReference type="PRINTS" id="PR00072">
    <property type="entry name" value="MALOXRDTASE"/>
</dbReference>
<dbReference type="SMART" id="SM01274">
    <property type="entry name" value="malic"/>
    <property type="match status" value="1"/>
</dbReference>
<dbReference type="SMART" id="SM00919">
    <property type="entry name" value="Malic_M"/>
    <property type="match status" value="1"/>
</dbReference>
<dbReference type="SUPFAM" id="SSF53223">
    <property type="entry name" value="Aminoacid dehydrogenase-like, N-terminal domain"/>
    <property type="match status" value="1"/>
</dbReference>
<dbReference type="SUPFAM" id="SSF51735">
    <property type="entry name" value="NAD(P)-binding Rossmann-fold domains"/>
    <property type="match status" value="1"/>
</dbReference>
<dbReference type="PROSITE" id="PS00331">
    <property type="entry name" value="MALIC_ENZYMES"/>
    <property type="match status" value="1"/>
</dbReference>
<feature type="chain" id="PRO_0000160235" description="NAD-dependent malic enzyme">
    <location>
        <begin position="1"/>
        <end position="562"/>
    </location>
</feature>
<feature type="active site" description="Proton donor" evidence="1">
    <location>
        <position position="101"/>
    </location>
</feature>
<feature type="active site" description="Proton acceptor" evidence="1">
    <location>
        <position position="172"/>
    </location>
</feature>
<feature type="binding site" evidence="1">
    <location>
        <position position="154"/>
    </location>
    <ligand>
        <name>NAD(+)</name>
        <dbReference type="ChEBI" id="CHEBI:57540"/>
    </ligand>
</feature>
<feature type="binding site" evidence="1">
    <location>
        <position position="243"/>
    </location>
    <ligand>
        <name>a divalent metal cation</name>
        <dbReference type="ChEBI" id="CHEBI:60240"/>
    </ligand>
</feature>
<feature type="binding site" evidence="1">
    <location>
        <position position="244"/>
    </location>
    <ligand>
        <name>a divalent metal cation</name>
        <dbReference type="ChEBI" id="CHEBI:60240"/>
    </ligand>
</feature>
<feature type="binding site" evidence="1">
    <location>
        <position position="267"/>
    </location>
    <ligand>
        <name>a divalent metal cation</name>
        <dbReference type="ChEBI" id="CHEBI:60240"/>
    </ligand>
</feature>
<feature type="binding site" evidence="1">
    <location>
        <position position="267"/>
    </location>
    <ligand>
        <name>NAD(+)</name>
        <dbReference type="ChEBI" id="CHEBI:57540"/>
    </ligand>
</feature>
<feature type="binding site" evidence="1">
    <location>
        <position position="415"/>
    </location>
    <ligand>
        <name>NAD(+)</name>
        <dbReference type="ChEBI" id="CHEBI:57540"/>
    </ligand>
</feature>
<feature type="site" description="Important for activity" evidence="1">
    <location>
        <position position="267"/>
    </location>
</feature>